<comment type="function">
    <text evidence="1">Can catalyze the hydrolysis of ATP in the presence of single-stranded DNA, the ATP-dependent uptake of single-stranded DNA by duplex DNA, and the ATP-dependent hybridization of homologous single-stranded DNAs. It interacts with LexA causing its activation and leading to its autocatalytic cleavage.</text>
</comment>
<comment type="subcellular location">
    <subcellularLocation>
        <location evidence="1">Cytoplasm</location>
    </subcellularLocation>
</comment>
<comment type="similarity">
    <text evidence="1">Belongs to the RecA family.</text>
</comment>
<comment type="sequence caution" evidence="3">
    <conflict type="erroneous initiation">
        <sequence resource="EMBL-CDS" id="CAG21384"/>
    </conflict>
</comment>
<sequence length="352" mass="37746">MDDNKQKALAAALGQIEKQFGKGSIMRLGDNKTMDIETVSTGSLALDIALGAGGLPMGRIVEIYGPESSGKTTLTLEVIASAQKAGKTCAFIDAEHALDPIYAQKLGVDIDQLLCSQPDTGEQALEIVDALARSGAVDLIVVDSVAALTPKAEIEGEMGDSHMGLQARMLSQAMRKLTGNLKNANCMCIFINQIRMKIGVMFGNPETTTGGNALKFYASVRLDIRRTGAIKDGDEVVGNETRIKVVKNKIAAPFKQAETQILYGQGFNRNGELIDLGVKHKLVEKAGAWYSYKGNKIGQGKANSCKHLVENPAIAEEIEKLLRDMLLSPVGEEVEKADVKKDAKKDAAEALK</sequence>
<gene>
    <name evidence="1" type="primary">recA</name>
    <name type="ordered locus">PBPRA3068</name>
</gene>
<name>RECA_PHOPR</name>
<organism>
    <name type="scientific">Photobacterium profundum (strain SS9)</name>
    <dbReference type="NCBI Taxonomy" id="298386"/>
    <lineage>
        <taxon>Bacteria</taxon>
        <taxon>Pseudomonadati</taxon>
        <taxon>Pseudomonadota</taxon>
        <taxon>Gammaproteobacteria</taxon>
        <taxon>Vibrionales</taxon>
        <taxon>Vibrionaceae</taxon>
        <taxon>Photobacterium</taxon>
    </lineage>
</organism>
<feature type="chain" id="PRO_0000122792" description="Protein RecA">
    <location>
        <begin position="1"/>
        <end position="352"/>
    </location>
</feature>
<feature type="region of interest" description="Disordered" evidence="2">
    <location>
        <begin position="332"/>
        <end position="352"/>
    </location>
</feature>
<feature type="compositionally biased region" description="Basic and acidic residues" evidence="2">
    <location>
        <begin position="333"/>
        <end position="352"/>
    </location>
</feature>
<feature type="binding site" evidence="1">
    <location>
        <begin position="65"/>
        <end position="72"/>
    </location>
    <ligand>
        <name>ATP</name>
        <dbReference type="ChEBI" id="CHEBI:30616"/>
    </ligand>
</feature>
<reference key="1">
    <citation type="journal article" date="2005" name="Science">
        <title>Life at depth: Photobacterium profundum genome sequence and expression analysis.</title>
        <authorList>
            <person name="Vezzi A."/>
            <person name="Campanaro S."/>
            <person name="D'Angelo M."/>
            <person name="Simonato F."/>
            <person name="Vitulo N."/>
            <person name="Lauro F.M."/>
            <person name="Cestaro A."/>
            <person name="Malacrida G."/>
            <person name="Simionati B."/>
            <person name="Cannata N."/>
            <person name="Romualdi C."/>
            <person name="Bartlett D.H."/>
            <person name="Valle G."/>
        </authorList>
    </citation>
    <scope>NUCLEOTIDE SEQUENCE [LARGE SCALE GENOMIC DNA]</scope>
    <source>
        <strain>ATCC BAA-1253 / SS9</strain>
    </source>
</reference>
<keyword id="KW-0067">ATP-binding</keyword>
<keyword id="KW-0963">Cytoplasm</keyword>
<keyword id="KW-0227">DNA damage</keyword>
<keyword id="KW-0233">DNA recombination</keyword>
<keyword id="KW-0234">DNA repair</keyword>
<keyword id="KW-0238">DNA-binding</keyword>
<keyword id="KW-0547">Nucleotide-binding</keyword>
<keyword id="KW-1185">Reference proteome</keyword>
<keyword id="KW-0742">SOS response</keyword>
<evidence type="ECO:0000255" key="1">
    <source>
        <dbReference type="HAMAP-Rule" id="MF_00268"/>
    </source>
</evidence>
<evidence type="ECO:0000256" key="2">
    <source>
        <dbReference type="SAM" id="MobiDB-lite"/>
    </source>
</evidence>
<evidence type="ECO:0000305" key="3"/>
<protein>
    <recommendedName>
        <fullName evidence="1">Protein RecA</fullName>
    </recommendedName>
    <alternativeName>
        <fullName evidence="1">Recombinase A</fullName>
    </alternativeName>
</protein>
<proteinExistence type="inferred from homology"/>
<accession>Q6LMU2</accession>
<dbReference type="EMBL" id="CR378673">
    <property type="protein sequence ID" value="CAG21384.1"/>
    <property type="status" value="ALT_INIT"/>
    <property type="molecule type" value="Genomic_DNA"/>
</dbReference>
<dbReference type="RefSeq" id="WP_041394511.1">
    <property type="nucleotide sequence ID" value="NC_006370.1"/>
</dbReference>
<dbReference type="SMR" id="Q6LMU2"/>
<dbReference type="STRING" id="298386.PBPRA3068"/>
<dbReference type="KEGG" id="ppr:PBPRA3068"/>
<dbReference type="eggNOG" id="COG0468">
    <property type="taxonomic scope" value="Bacteria"/>
</dbReference>
<dbReference type="HOGENOM" id="CLU_040469_3_2_6"/>
<dbReference type="Proteomes" id="UP000000593">
    <property type="component" value="Chromosome 1"/>
</dbReference>
<dbReference type="GO" id="GO:0005829">
    <property type="term" value="C:cytosol"/>
    <property type="evidence" value="ECO:0007669"/>
    <property type="project" value="TreeGrafter"/>
</dbReference>
<dbReference type="GO" id="GO:0005524">
    <property type="term" value="F:ATP binding"/>
    <property type="evidence" value="ECO:0007669"/>
    <property type="project" value="UniProtKB-UniRule"/>
</dbReference>
<dbReference type="GO" id="GO:0016887">
    <property type="term" value="F:ATP hydrolysis activity"/>
    <property type="evidence" value="ECO:0007669"/>
    <property type="project" value="InterPro"/>
</dbReference>
<dbReference type="GO" id="GO:0140664">
    <property type="term" value="F:ATP-dependent DNA damage sensor activity"/>
    <property type="evidence" value="ECO:0007669"/>
    <property type="project" value="InterPro"/>
</dbReference>
<dbReference type="GO" id="GO:0003684">
    <property type="term" value="F:damaged DNA binding"/>
    <property type="evidence" value="ECO:0007669"/>
    <property type="project" value="UniProtKB-UniRule"/>
</dbReference>
<dbReference type="GO" id="GO:0003697">
    <property type="term" value="F:single-stranded DNA binding"/>
    <property type="evidence" value="ECO:0007669"/>
    <property type="project" value="UniProtKB-UniRule"/>
</dbReference>
<dbReference type="GO" id="GO:0006310">
    <property type="term" value="P:DNA recombination"/>
    <property type="evidence" value="ECO:0007669"/>
    <property type="project" value="UniProtKB-UniRule"/>
</dbReference>
<dbReference type="GO" id="GO:0006281">
    <property type="term" value="P:DNA repair"/>
    <property type="evidence" value="ECO:0007669"/>
    <property type="project" value="UniProtKB-UniRule"/>
</dbReference>
<dbReference type="GO" id="GO:0009432">
    <property type="term" value="P:SOS response"/>
    <property type="evidence" value="ECO:0007669"/>
    <property type="project" value="UniProtKB-UniRule"/>
</dbReference>
<dbReference type="CDD" id="cd00983">
    <property type="entry name" value="RecA"/>
    <property type="match status" value="1"/>
</dbReference>
<dbReference type="FunFam" id="3.40.50.300:FF:000087">
    <property type="entry name" value="Recombinase RecA"/>
    <property type="match status" value="1"/>
</dbReference>
<dbReference type="Gene3D" id="3.40.50.300">
    <property type="entry name" value="P-loop containing nucleotide triphosphate hydrolases"/>
    <property type="match status" value="1"/>
</dbReference>
<dbReference type="HAMAP" id="MF_00268">
    <property type="entry name" value="RecA"/>
    <property type="match status" value="1"/>
</dbReference>
<dbReference type="InterPro" id="IPR003593">
    <property type="entry name" value="AAA+_ATPase"/>
</dbReference>
<dbReference type="InterPro" id="IPR013765">
    <property type="entry name" value="DNA_recomb/repair_RecA"/>
</dbReference>
<dbReference type="InterPro" id="IPR020584">
    <property type="entry name" value="DNA_recomb/repair_RecA_CS"/>
</dbReference>
<dbReference type="InterPro" id="IPR027417">
    <property type="entry name" value="P-loop_NTPase"/>
</dbReference>
<dbReference type="InterPro" id="IPR049261">
    <property type="entry name" value="RecA-like_C"/>
</dbReference>
<dbReference type="InterPro" id="IPR049428">
    <property type="entry name" value="RecA-like_N"/>
</dbReference>
<dbReference type="InterPro" id="IPR020588">
    <property type="entry name" value="RecA_ATP-bd"/>
</dbReference>
<dbReference type="InterPro" id="IPR023400">
    <property type="entry name" value="RecA_C_sf"/>
</dbReference>
<dbReference type="InterPro" id="IPR020587">
    <property type="entry name" value="RecA_monomer-monomer_interface"/>
</dbReference>
<dbReference type="NCBIfam" id="TIGR02012">
    <property type="entry name" value="tigrfam_recA"/>
    <property type="match status" value="1"/>
</dbReference>
<dbReference type="PANTHER" id="PTHR45900:SF1">
    <property type="entry name" value="MITOCHONDRIAL DNA REPAIR PROTEIN RECA HOMOLOG-RELATED"/>
    <property type="match status" value="1"/>
</dbReference>
<dbReference type="PANTHER" id="PTHR45900">
    <property type="entry name" value="RECA"/>
    <property type="match status" value="1"/>
</dbReference>
<dbReference type="Pfam" id="PF00154">
    <property type="entry name" value="RecA"/>
    <property type="match status" value="1"/>
</dbReference>
<dbReference type="Pfam" id="PF21096">
    <property type="entry name" value="RecA_C"/>
    <property type="match status" value="1"/>
</dbReference>
<dbReference type="PRINTS" id="PR00142">
    <property type="entry name" value="RECA"/>
</dbReference>
<dbReference type="SMART" id="SM00382">
    <property type="entry name" value="AAA"/>
    <property type="match status" value="1"/>
</dbReference>
<dbReference type="SUPFAM" id="SSF52540">
    <property type="entry name" value="P-loop containing nucleoside triphosphate hydrolases"/>
    <property type="match status" value="1"/>
</dbReference>
<dbReference type="SUPFAM" id="SSF54752">
    <property type="entry name" value="RecA protein, C-terminal domain"/>
    <property type="match status" value="1"/>
</dbReference>
<dbReference type="PROSITE" id="PS00321">
    <property type="entry name" value="RECA_1"/>
    <property type="match status" value="1"/>
</dbReference>
<dbReference type="PROSITE" id="PS50162">
    <property type="entry name" value="RECA_2"/>
    <property type="match status" value="1"/>
</dbReference>
<dbReference type="PROSITE" id="PS50163">
    <property type="entry name" value="RECA_3"/>
    <property type="match status" value="1"/>
</dbReference>